<dbReference type="EC" id="7.1.1.2"/>
<dbReference type="EMBL" id="DQ312369">
    <property type="protein sequence ID" value="ABC47523.1"/>
    <property type="molecule type" value="Genomic_DNA"/>
</dbReference>
<dbReference type="SMR" id="Q1HV38"/>
<dbReference type="GO" id="GO:0005743">
    <property type="term" value="C:mitochondrial inner membrane"/>
    <property type="evidence" value="ECO:0000250"/>
    <property type="project" value="UniProtKB"/>
</dbReference>
<dbReference type="GO" id="GO:0045271">
    <property type="term" value="C:respiratory chain complex I"/>
    <property type="evidence" value="ECO:0000250"/>
    <property type="project" value="UniProtKB"/>
</dbReference>
<dbReference type="GO" id="GO:0008137">
    <property type="term" value="F:NADH dehydrogenase (ubiquinone) activity"/>
    <property type="evidence" value="ECO:0000250"/>
    <property type="project" value="UniProtKB"/>
</dbReference>
<dbReference type="GO" id="GO:0042773">
    <property type="term" value="P:ATP synthesis coupled electron transport"/>
    <property type="evidence" value="ECO:0007669"/>
    <property type="project" value="InterPro"/>
</dbReference>
<dbReference type="FunFam" id="1.10.287.3510:FF:000002">
    <property type="entry name" value="NADH-ubiquinone oxidoreductase chain 4L"/>
    <property type="match status" value="1"/>
</dbReference>
<dbReference type="Gene3D" id="1.10.287.3510">
    <property type="match status" value="1"/>
</dbReference>
<dbReference type="InterPro" id="IPR001133">
    <property type="entry name" value="NADH_UbQ_OxRdtase_chain4L/K"/>
</dbReference>
<dbReference type="InterPro" id="IPR039428">
    <property type="entry name" value="NUOK/Mnh_C1-like"/>
</dbReference>
<dbReference type="PANTHER" id="PTHR11434:SF0">
    <property type="entry name" value="NADH-UBIQUINONE OXIDOREDUCTASE CHAIN 4L"/>
    <property type="match status" value="1"/>
</dbReference>
<dbReference type="PANTHER" id="PTHR11434">
    <property type="entry name" value="NADH-UBIQUINONE OXIDOREDUCTASE SUBUNIT ND4L"/>
    <property type="match status" value="1"/>
</dbReference>
<dbReference type="Pfam" id="PF00420">
    <property type="entry name" value="Oxidored_q2"/>
    <property type="match status" value="1"/>
</dbReference>
<gene>
    <name type="primary">MT-ND4L</name>
    <name type="synonym">MTND4L</name>
    <name type="synonym">NADH4L</name>
    <name type="synonym">ND4L</name>
</gene>
<protein>
    <recommendedName>
        <fullName>NADH-ubiquinone oxidoreductase chain 4L</fullName>
        <ecNumber>7.1.1.2</ecNumber>
    </recommendedName>
    <alternativeName>
        <fullName>NADH dehydrogenase subunit 4L</fullName>
    </alternativeName>
</protein>
<feature type="chain" id="PRO_0000274996" description="NADH-ubiquinone oxidoreductase chain 4L">
    <location>
        <begin position="1"/>
        <end position="98"/>
    </location>
</feature>
<feature type="transmembrane region" description="Helical" evidence="3">
    <location>
        <begin position="1"/>
        <end position="21"/>
    </location>
</feature>
<feature type="transmembrane region" description="Helical" evidence="3">
    <location>
        <begin position="29"/>
        <end position="49"/>
    </location>
</feature>
<feature type="transmembrane region" description="Helical" evidence="3">
    <location>
        <begin position="61"/>
        <end position="81"/>
    </location>
</feature>
<name>NU4LM_CHIVL</name>
<geneLocation type="mitochondrion"/>
<reference key="1">
    <citation type="journal article" date="2006" name="Mol. Phylogenet. Evol.">
        <title>Molecular systematics of Vampyressine bats (Phyllostomidae: Stenodermatinae) with comparison of direct and indirect surveys of mitochondrial DNA variation.</title>
        <authorList>
            <person name="Hoofer S.R."/>
            <person name="Baker R.J."/>
        </authorList>
    </citation>
    <scope>NUCLEOTIDE SEQUENCE [GENOMIC DNA]</scope>
</reference>
<proteinExistence type="inferred from homology"/>
<accession>Q1HV38</accession>
<comment type="function">
    <text evidence="1">Core subunit of the mitochondrial membrane respiratory chain NADH dehydrogenase (Complex I) which catalyzes electron transfer from NADH through the respiratory chain, using ubiquinone as an electron acceptor. Part of the enzyme membrane arm which is embedded in the lipid bilayer and involved in proton translocation.</text>
</comment>
<comment type="catalytic activity">
    <reaction evidence="1">
        <text>a ubiquinone + NADH + 5 H(+)(in) = a ubiquinol + NAD(+) + 4 H(+)(out)</text>
        <dbReference type="Rhea" id="RHEA:29091"/>
        <dbReference type="Rhea" id="RHEA-COMP:9565"/>
        <dbReference type="Rhea" id="RHEA-COMP:9566"/>
        <dbReference type="ChEBI" id="CHEBI:15378"/>
        <dbReference type="ChEBI" id="CHEBI:16389"/>
        <dbReference type="ChEBI" id="CHEBI:17976"/>
        <dbReference type="ChEBI" id="CHEBI:57540"/>
        <dbReference type="ChEBI" id="CHEBI:57945"/>
        <dbReference type="EC" id="7.1.1.2"/>
    </reaction>
    <physiologicalReaction direction="left-to-right" evidence="1">
        <dbReference type="Rhea" id="RHEA:29092"/>
    </physiologicalReaction>
</comment>
<comment type="subunit">
    <text evidence="2">Core subunit of respiratory chain NADH dehydrogenase (Complex I) which is composed of 45 different subunits.</text>
</comment>
<comment type="subcellular location">
    <subcellularLocation>
        <location evidence="2">Mitochondrion inner membrane</location>
        <topology evidence="3">Multi-pass membrane protein</topology>
    </subcellularLocation>
</comment>
<comment type="similarity">
    <text evidence="4">Belongs to the complex I subunit 4L family.</text>
</comment>
<organism>
    <name type="scientific">Chiroderma villosum</name>
    <name type="common">Hairy big-eyed bat</name>
    <dbReference type="NCBI Taxonomy" id="33546"/>
    <lineage>
        <taxon>Eukaryota</taxon>
        <taxon>Metazoa</taxon>
        <taxon>Chordata</taxon>
        <taxon>Craniata</taxon>
        <taxon>Vertebrata</taxon>
        <taxon>Euteleostomi</taxon>
        <taxon>Mammalia</taxon>
        <taxon>Eutheria</taxon>
        <taxon>Laurasiatheria</taxon>
        <taxon>Chiroptera</taxon>
        <taxon>Yangochiroptera</taxon>
        <taxon>Phyllostomidae</taxon>
        <taxon>Stenodermatinae</taxon>
        <taxon>Chiroderma</taxon>
    </lineage>
</organism>
<evidence type="ECO:0000250" key="1">
    <source>
        <dbReference type="UniProtKB" id="P03901"/>
    </source>
</evidence>
<evidence type="ECO:0000250" key="2">
    <source>
        <dbReference type="UniProtKB" id="P03902"/>
    </source>
</evidence>
<evidence type="ECO:0000255" key="3"/>
<evidence type="ECO:0000305" key="4"/>
<sequence length="98" mass="10949">MSLTYMNMFMAFTISLLGLLMYRSHMMSSLLCLEGMMLSLFVMMTMTILNTHLTLASMIPIILLVFAACEAALGLSLLVMVSTTYGMDYVQNLNLLQC</sequence>
<keyword id="KW-0249">Electron transport</keyword>
<keyword id="KW-0472">Membrane</keyword>
<keyword id="KW-0496">Mitochondrion</keyword>
<keyword id="KW-0999">Mitochondrion inner membrane</keyword>
<keyword id="KW-0520">NAD</keyword>
<keyword id="KW-0679">Respiratory chain</keyword>
<keyword id="KW-1278">Translocase</keyword>
<keyword id="KW-0812">Transmembrane</keyword>
<keyword id="KW-1133">Transmembrane helix</keyword>
<keyword id="KW-0813">Transport</keyword>
<keyword id="KW-0830">Ubiquinone</keyword>